<reference key="1">
    <citation type="submission" date="2007-10" db="EMBL/GenBank/DDBJ databases">
        <title>Genome sequence of Campylobacter concisus 13826 isolated from human feces.</title>
        <authorList>
            <person name="Fouts D.E."/>
            <person name="Mongodin E.F."/>
            <person name="Puiu D."/>
            <person name="Sebastian Y."/>
            <person name="Miller W.G."/>
            <person name="Mandrell R.E."/>
            <person name="On S."/>
            <person name="Nelson K.E."/>
        </authorList>
    </citation>
    <scope>NUCLEOTIDE SEQUENCE [LARGE SCALE GENOMIC DNA]</scope>
    <source>
        <strain>13826</strain>
    </source>
</reference>
<keyword id="KW-0547">Nucleotide-binding</keyword>
<gene>
    <name type="ordered locus">Ccon26_01810</name>
    <name type="ORF">CCC13826_1649</name>
</gene>
<proteinExistence type="inferred from homology"/>
<protein>
    <recommendedName>
        <fullName evidence="1">Nucleotide-binding protein Ccon26_01810</fullName>
    </recommendedName>
</protein>
<evidence type="ECO:0000255" key="1">
    <source>
        <dbReference type="HAMAP-Rule" id="MF_00632"/>
    </source>
</evidence>
<comment type="function">
    <text evidence="1">Nucleotide-binding protein.</text>
</comment>
<comment type="similarity">
    <text evidence="1">Belongs to the YajQ family.</text>
</comment>
<dbReference type="EMBL" id="CP000792">
    <property type="protein sequence ID" value="EAT97892.1"/>
    <property type="molecule type" value="Genomic_DNA"/>
</dbReference>
<dbReference type="RefSeq" id="WP_002942447.1">
    <property type="nucleotide sequence ID" value="NC_009802.2"/>
</dbReference>
<dbReference type="SMR" id="A7ZBD9"/>
<dbReference type="STRING" id="360104.CCC13826_1649"/>
<dbReference type="KEGG" id="cco:CCC13826_1649"/>
<dbReference type="eggNOG" id="COG1666">
    <property type="taxonomic scope" value="Bacteria"/>
</dbReference>
<dbReference type="HOGENOM" id="CLU_099839_1_0_7"/>
<dbReference type="OrthoDB" id="9801447at2"/>
<dbReference type="Proteomes" id="UP000001121">
    <property type="component" value="Chromosome"/>
</dbReference>
<dbReference type="GO" id="GO:0005829">
    <property type="term" value="C:cytosol"/>
    <property type="evidence" value="ECO:0007669"/>
    <property type="project" value="TreeGrafter"/>
</dbReference>
<dbReference type="GO" id="GO:0000166">
    <property type="term" value="F:nucleotide binding"/>
    <property type="evidence" value="ECO:0007669"/>
    <property type="project" value="TreeGrafter"/>
</dbReference>
<dbReference type="CDD" id="cd11740">
    <property type="entry name" value="YajQ_like"/>
    <property type="match status" value="1"/>
</dbReference>
<dbReference type="Gene3D" id="3.30.70.860">
    <property type="match status" value="1"/>
</dbReference>
<dbReference type="Gene3D" id="3.30.70.990">
    <property type="entry name" value="YajQ-like, domain 2"/>
    <property type="match status" value="1"/>
</dbReference>
<dbReference type="HAMAP" id="MF_00632">
    <property type="entry name" value="YajQ"/>
    <property type="match status" value="1"/>
</dbReference>
<dbReference type="InterPro" id="IPR007551">
    <property type="entry name" value="DUF520"/>
</dbReference>
<dbReference type="InterPro" id="IPR035571">
    <property type="entry name" value="UPF0234-like_C"/>
</dbReference>
<dbReference type="InterPro" id="IPR035570">
    <property type="entry name" value="UPF0234_N"/>
</dbReference>
<dbReference type="InterPro" id="IPR036183">
    <property type="entry name" value="YajQ-like_sf"/>
</dbReference>
<dbReference type="NCBIfam" id="NF003819">
    <property type="entry name" value="PRK05412.1"/>
    <property type="match status" value="1"/>
</dbReference>
<dbReference type="PANTHER" id="PTHR30476">
    <property type="entry name" value="UPF0234 PROTEIN YAJQ"/>
    <property type="match status" value="1"/>
</dbReference>
<dbReference type="PANTHER" id="PTHR30476:SF0">
    <property type="entry name" value="UPF0234 PROTEIN YAJQ"/>
    <property type="match status" value="1"/>
</dbReference>
<dbReference type="Pfam" id="PF04461">
    <property type="entry name" value="DUF520"/>
    <property type="match status" value="1"/>
</dbReference>
<dbReference type="SUPFAM" id="SSF89963">
    <property type="entry name" value="YajQ-like"/>
    <property type="match status" value="2"/>
</dbReference>
<name>Y181_CAMC1</name>
<accession>A7ZBD9</accession>
<sequence length="165" mass="18328">MASEHSFDISAEVDMMEVKNALETAKKEIAARYDFKGLAAEVELNEKEKFITLLSSSDNKIDALKDIVISKLIKRNIPPVAITETKREPASGGNLKATLKLNDTLDSENSKKITKAIKDSKIKVSAQIRGEEIRVTSKSIDDLQECIKLVRGLNLELPISFKNLK</sequence>
<feature type="chain" id="PRO_1000147284" description="Nucleotide-binding protein Ccon26_01810">
    <location>
        <begin position="1"/>
        <end position="165"/>
    </location>
</feature>
<organism>
    <name type="scientific">Campylobacter concisus (strain 13826)</name>
    <dbReference type="NCBI Taxonomy" id="360104"/>
    <lineage>
        <taxon>Bacteria</taxon>
        <taxon>Pseudomonadati</taxon>
        <taxon>Campylobacterota</taxon>
        <taxon>Epsilonproteobacteria</taxon>
        <taxon>Campylobacterales</taxon>
        <taxon>Campylobacteraceae</taxon>
        <taxon>Campylobacter</taxon>
    </lineage>
</organism>